<organism>
    <name type="scientific">Allorhizobium ampelinum (strain ATCC BAA-846 / DSM 112012 / S4)</name>
    <name type="common">Agrobacterium vitis (strain S4)</name>
    <dbReference type="NCBI Taxonomy" id="311402"/>
    <lineage>
        <taxon>Bacteria</taxon>
        <taxon>Pseudomonadati</taxon>
        <taxon>Pseudomonadota</taxon>
        <taxon>Alphaproteobacteria</taxon>
        <taxon>Hyphomicrobiales</taxon>
        <taxon>Rhizobiaceae</taxon>
        <taxon>Rhizobium/Agrobacterium group</taxon>
        <taxon>Allorhizobium</taxon>
        <taxon>Allorhizobium ampelinum</taxon>
    </lineage>
</organism>
<dbReference type="EMBL" id="CP000633">
    <property type="protein sequence ID" value="ACM36342.1"/>
    <property type="molecule type" value="Genomic_DNA"/>
</dbReference>
<dbReference type="RefSeq" id="WP_015915763.1">
    <property type="nucleotide sequence ID" value="NC_011989.1"/>
</dbReference>
<dbReference type="SMR" id="B9JVR2"/>
<dbReference type="STRING" id="311402.Avi_1869"/>
<dbReference type="KEGG" id="avi:Avi_1869"/>
<dbReference type="eggNOG" id="COG0203">
    <property type="taxonomic scope" value="Bacteria"/>
</dbReference>
<dbReference type="HOGENOM" id="CLU_074407_2_0_5"/>
<dbReference type="Proteomes" id="UP000001596">
    <property type="component" value="Chromosome 1"/>
</dbReference>
<dbReference type="GO" id="GO:0022625">
    <property type="term" value="C:cytosolic large ribosomal subunit"/>
    <property type="evidence" value="ECO:0007669"/>
    <property type="project" value="TreeGrafter"/>
</dbReference>
<dbReference type="GO" id="GO:0003735">
    <property type="term" value="F:structural constituent of ribosome"/>
    <property type="evidence" value="ECO:0007669"/>
    <property type="project" value="InterPro"/>
</dbReference>
<dbReference type="GO" id="GO:0006412">
    <property type="term" value="P:translation"/>
    <property type="evidence" value="ECO:0007669"/>
    <property type="project" value="UniProtKB-UniRule"/>
</dbReference>
<dbReference type="FunFam" id="3.90.1030.10:FF:000001">
    <property type="entry name" value="50S ribosomal protein L17"/>
    <property type="match status" value="1"/>
</dbReference>
<dbReference type="Gene3D" id="3.90.1030.10">
    <property type="entry name" value="Ribosomal protein L17"/>
    <property type="match status" value="1"/>
</dbReference>
<dbReference type="HAMAP" id="MF_01368">
    <property type="entry name" value="Ribosomal_bL17"/>
    <property type="match status" value="1"/>
</dbReference>
<dbReference type="InterPro" id="IPR000456">
    <property type="entry name" value="Ribosomal_bL17"/>
</dbReference>
<dbReference type="InterPro" id="IPR047859">
    <property type="entry name" value="Ribosomal_bL17_CS"/>
</dbReference>
<dbReference type="InterPro" id="IPR036373">
    <property type="entry name" value="Ribosomal_bL17_sf"/>
</dbReference>
<dbReference type="NCBIfam" id="TIGR00059">
    <property type="entry name" value="L17"/>
    <property type="match status" value="1"/>
</dbReference>
<dbReference type="PANTHER" id="PTHR14413:SF16">
    <property type="entry name" value="LARGE RIBOSOMAL SUBUNIT PROTEIN BL17M"/>
    <property type="match status" value="1"/>
</dbReference>
<dbReference type="PANTHER" id="PTHR14413">
    <property type="entry name" value="RIBOSOMAL PROTEIN L17"/>
    <property type="match status" value="1"/>
</dbReference>
<dbReference type="Pfam" id="PF01196">
    <property type="entry name" value="Ribosomal_L17"/>
    <property type="match status" value="1"/>
</dbReference>
<dbReference type="SUPFAM" id="SSF64263">
    <property type="entry name" value="Prokaryotic ribosomal protein L17"/>
    <property type="match status" value="1"/>
</dbReference>
<dbReference type="PROSITE" id="PS01167">
    <property type="entry name" value="RIBOSOMAL_L17"/>
    <property type="match status" value="1"/>
</dbReference>
<keyword id="KW-1185">Reference proteome</keyword>
<keyword id="KW-0687">Ribonucleoprotein</keyword>
<keyword id="KW-0689">Ribosomal protein</keyword>
<feature type="chain" id="PRO_1000183991" description="Large ribosomal subunit protein bL17">
    <location>
        <begin position="1"/>
        <end position="141"/>
    </location>
</feature>
<sequence length="141" mass="15604">MRHQKAGRKLNRTASHRKAMFANMAASLITHEQIVTTLPKAKEIRPIVERLVTLGKRGDLHARRQAISQIRDQDAVRKLFDAIATRYASRNGGYLRIMKAGFRQGDNAPLAVIEFVERDVDAKGAADKARVAAEAETAEAA</sequence>
<name>RL17_ALLAM</name>
<protein>
    <recommendedName>
        <fullName evidence="1">Large ribosomal subunit protein bL17</fullName>
    </recommendedName>
    <alternativeName>
        <fullName evidence="2">50S ribosomal protein L17</fullName>
    </alternativeName>
</protein>
<proteinExistence type="inferred from homology"/>
<accession>B9JVR2</accession>
<comment type="subunit">
    <text evidence="1">Part of the 50S ribosomal subunit. Contacts protein L32.</text>
</comment>
<comment type="similarity">
    <text evidence="1">Belongs to the bacterial ribosomal protein bL17 family.</text>
</comment>
<evidence type="ECO:0000255" key="1">
    <source>
        <dbReference type="HAMAP-Rule" id="MF_01368"/>
    </source>
</evidence>
<evidence type="ECO:0000305" key="2"/>
<gene>
    <name evidence="1" type="primary">rplQ</name>
    <name type="ordered locus">Avi_1869</name>
</gene>
<reference key="1">
    <citation type="journal article" date="2009" name="J. Bacteriol.">
        <title>Genome sequences of three Agrobacterium biovars help elucidate the evolution of multichromosome genomes in bacteria.</title>
        <authorList>
            <person name="Slater S.C."/>
            <person name="Goldman B.S."/>
            <person name="Goodner B."/>
            <person name="Setubal J.C."/>
            <person name="Farrand S.K."/>
            <person name="Nester E.W."/>
            <person name="Burr T.J."/>
            <person name="Banta L."/>
            <person name="Dickerman A.W."/>
            <person name="Paulsen I."/>
            <person name="Otten L."/>
            <person name="Suen G."/>
            <person name="Welch R."/>
            <person name="Almeida N.F."/>
            <person name="Arnold F."/>
            <person name="Burton O.T."/>
            <person name="Du Z."/>
            <person name="Ewing A."/>
            <person name="Godsy E."/>
            <person name="Heisel S."/>
            <person name="Houmiel K.L."/>
            <person name="Jhaveri J."/>
            <person name="Lu J."/>
            <person name="Miller N.M."/>
            <person name="Norton S."/>
            <person name="Chen Q."/>
            <person name="Phoolcharoen W."/>
            <person name="Ohlin V."/>
            <person name="Ondrusek D."/>
            <person name="Pride N."/>
            <person name="Stricklin S.L."/>
            <person name="Sun J."/>
            <person name="Wheeler C."/>
            <person name="Wilson L."/>
            <person name="Zhu H."/>
            <person name="Wood D.W."/>
        </authorList>
    </citation>
    <scope>NUCLEOTIDE SEQUENCE [LARGE SCALE GENOMIC DNA]</scope>
    <source>
        <strain>ATCC BAA-846 / DSM 112012 / S4</strain>
    </source>
</reference>